<sequence length="66" mass="6824">MNQGRIWTVVNPGVGLPLLLGSVTVIAILVHYAVLSNTTWFPKYWNGATVAAPAAAPAPAAPAAKK</sequence>
<feature type="chain" id="PRO_0000099797" description="Light-harvesting protein B-800-850 alpha chain B">
    <location>
        <begin position="1"/>
        <end position="66"/>
    </location>
</feature>
<feature type="topological domain" description="Cytoplasmic" evidence="1">
    <location>
        <begin position="1"/>
        <end position="11"/>
    </location>
</feature>
<feature type="transmembrane region" description="Helical" evidence="1">
    <location>
        <begin position="12"/>
        <end position="35"/>
    </location>
</feature>
<feature type="topological domain" description="Periplasmic" evidence="1">
    <location>
        <begin position="36"/>
        <end position="66"/>
    </location>
</feature>
<feature type="binding site" description="axial binding residue" evidence="1">
    <location>
        <position position="31"/>
    </location>
    <ligand>
        <name>a bacteriochlorophyll</name>
        <dbReference type="ChEBI" id="CHEBI:38201"/>
    </ligand>
    <ligandPart>
        <name>Mg</name>
        <dbReference type="ChEBI" id="CHEBI:25107"/>
    </ligandPart>
</feature>
<feature type="helix" evidence="3">
    <location>
        <begin position="4"/>
        <end position="8"/>
    </location>
</feature>
<feature type="helix" evidence="3">
    <location>
        <begin position="12"/>
        <end position="37"/>
    </location>
</feature>
<feature type="helix" evidence="3">
    <location>
        <begin position="40"/>
        <end position="46"/>
    </location>
</feature>
<dbReference type="EMBL" id="X64957">
    <property type="protein sequence ID" value="CAA46120.1"/>
    <property type="molecule type" value="Genomic_DNA"/>
</dbReference>
<dbReference type="EMBL" id="BX572606">
    <property type="protein sequence ID" value="CAE29733.1"/>
    <property type="molecule type" value="Genomic_DNA"/>
</dbReference>
<dbReference type="RefSeq" id="WP_011159826.1">
    <property type="nucleotide sequence ID" value="NZ_CP116810.1"/>
</dbReference>
<dbReference type="PDB" id="7ZDI">
    <property type="method" value="EM"/>
    <property type="resolution" value="2.90 A"/>
    <property type="chains" value="A/C/E/G/I/K/M/O/Q=1-66"/>
</dbReference>
<dbReference type="PDBsum" id="7ZDI"/>
<dbReference type="SMR" id="P35102"/>
<dbReference type="STRING" id="258594.RPA4292"/>
<dbReference type="GeneID" id="66895421"/>
<dbReference type="eggNOG" id="ENOG5033EHH">
    <property type="taxonomic scope" value="Bacteria"/>
</dbReference>
<dbReference type="HOGENOM" id="CLU_202473_0_0_5"/>
<dbReference type="PhylomeDB" id="P35102"/>
<dbReference type="GO" id="GO:0019866">
    <property type="term" value="C:organelle inner membrane"/>
    <property type="evidence" value="ECO:0007669"/>
    <property type="project" value="InterPro"/>
</dbReference>
<dbReference type="GO" id="GO:0005886">
    <property type="term" value="C:plasma membrane"/>
    <property type="evidence" value="ECO:0007669"/>
    <property type="project" value="UniProtKB-SubCell"/>
</dbReference>
<dbReference type="GO" id="GO:0030077">
    <property type="term" value="C:plasma membrane light-harvesting complex"/>
    <property type="evidence" value="ECO:0007669"/>
    <property type="project" value="InterPro"/>
</dbReference>
<dbReference type="GO" id="GO:0042314">
    <property type="term" value="F:bacteriochlorophyll binding"/>
    <property type="evidence" value="ECO:0007669"/>
    <property type="project" value="UniProtKB-KW"/>
</dbReference>
<dbReference type="GO" id="GO:0045156">
    <property type="term" value="F:electron transporter, transferring electrons within the cyclic electron transport pathway of photosynthesis activity"/>
    <property type="evidence" value="ECO:0007669"/>
    <property type="project" value="InterPro"/>
</dbReference>
<dbReference type="GO" id="GO:0046872">
    <property type="term" value="F:metal ion binding"/>
    <property type="evidence" value="ECO:0007669"/>
    <property type="project" value="UniProtKB-KW"/>
</dbReference>
<dbReference type="GO" id="GO:0019684">
    <property type="term" value="P:photosynthesis, light reaction"/>
    <property type="evidence" value="ECO:0007669"/>
    <property type="project" value="InterPro"/>
</dbReference>
<dbReference type="Gene3D" id="4.10.220.20">
    <property type="entry name" value="Light-harvesting complex"/>
    <property type="match status" value="1"/>
</dbReference>
<dbReference type="InterPro" id="IPR000066">
    <property type="entry name" value="Antenna_a/b"/>
</dbReference>
<dbReference type="InterPro" id="IPR018332">
    <property type="entry name" value="Antenna_alpha"/>
</dbReference>
<dbReference type="InterPro" id="IPR002361">
    <property type="entry name" value="Antenna_alpha_CS"/>
</dbReference>
<dbReference type="InterPro" id="IPR035889">
    <property type="entry name" value="Light-harvesting_complex"/>
</dbReference>
<dbReference type="Pfam" id="PF00556">
    <property type="entry name" value="LHC"/>
    <property type="match status" value="1"/>
</dbReference>
<dbReference type="PRINTS" id="PR00673">
    <property type="entry name" value="LIGHTHARVSTA"/>
</dbReference>
<dbReference type="SUPFAM" id="SSF56918">
    <property type="entry name" value="Light-harvesting complex subunits"/>
    <property type="match status" value="1"/>
</dbReference>
<dbReference type="PROSITE" id="PS00968">
    <property type="entry name" value="ANTENNA_COMP_ALPHA"/>
    <property type="match status" value="1"/>
</dbReference>
<accession>P35102</accession>
<gene>
    <name type="primary">pucAB</name>
    <name type="ordered locus">RPA4292</name>
</gene>
<keyword id="KW-0002">3D-structure</keyword>
<keyword id="KW-0042">Antenna complex</keyword>
<keyword id="KW-0076">Bacteriochlorophyll</keyword>
<keyword id="KW-0997">Cell inner membrane</keyword>
<keyword id="KW-1003">Cell membrane</keyword>
<keyword id="KW-0148">Chlorophyll</keyword>
<keyword id="KW-0157">Chromophore</keyword>
<keyword id="KW-0903">Direct protein sequencing</keyword>
<keyword id="KW-0437">Light-harvesting polypeptide</keyword>
<keyword id="KW-0460">Magnesium</keyword>
<keyword id="KW-0472">Membrane</keyword>
<keyword id="KW-0479">Metal-binding</keyword>
<keyword id="KW-0812">Transmembrane</keyword>
<keyword id="KW-1133">Transmembrane helix</keyword>
<reference key="1">
    <citation type="journal article" date="1989" name="EMBO J.">
        <title>Multiple copies of the coding regions for the light-harvesting B800-850 alpha- and beta-polypeptides are present in the Rhodopseudomonas palustris genome.</title>
        <authorList>
            <person name="Tadros M.H."/>
            <person name="Waterkamp K."/>
        </authorList>
    </citation>
    <scope>NUCLEOTIDE SEQUENCE [GENOMIC DNA]</scope>
    <scope>PROTEIN SEQUENCE OF 1-9</scope>
    <source>
        <strain>1E5</strain>
    </source>
</reference>
<reference key="2">
    <citation type="journal article" date="2004" name="Nat. Biotechnol.">
        <title>Complete genome sequence of the metabolically versatile photosynthetic bacterium Rhodopseudomonas palustris.</title>
        <authorList>
            <person name="Larimer F.W."/>
            <person name="Chain P."/>
            <person name="Hauser L."/>
            <person name="Lamerdin J.E."/>
            <person name="Malfatti S."/>
            <person name="Do L."/>
            <person name="Land M.L."/>
            <person name="Pelletier D.A."/>
            <person name="Beatty J.T."/>
            <person name="Lang A.S."/>
            <person name="Tabita F.R."/>
            <person name="Gibson J.L."/>
            <person name="Hanson T.E."/>
            <person name="Bobst C."/>
            <person name="Torres y Torres J.L."/>
            <person name="Peres C."/>
            <person name="Harrison F.H."/>
            <person name="Gibson J."/>
            <person name="Harwood C.S."/>
        </authorList>
    </citation>
    <scope>NUCLEOTIDE SEQUENCE [LARGE SCALE GENOMIC DNA]</scope>
    <source>
        <strain>ATCC BAA-98 / CGA009</strain>
    </source>
</reference>
<reference key="3">
    <citation type="book" date="1990" name="Current research in photosynthesis">
        <editorList>
            <person name="Baltscheffsky M."/>
        </editorList>
        <authorList>
            <person name="Brunisholz R.A."/>
            <person name="Evans M.B."/>
            <person name="Cogdell R.J."/>
            <person name="Frank G."/>
            <person name="Zuber H."/>
        </authorList>
    </citation>
    <scope>PROTEIN SEQUENCE OF 1-56</scope>
    <source>
        <strain>2.6.1 / French</strain>
    </source>
</reference>
<organism>
    <name type="scientific">Rhodopseudomonas palustris (strain ATCC BAA-98 / CGA009)</name>
    <dbReference type="NCBI Taxonomy" id="258594"/>
    <lineage>
        <taxon>Bacteria</taxon>
        <taxon>Pseudomonadati</taxon>
        <taxon>Pseudomonadota</taxon>
        <taxon>Alphaproteobacteria</taxon>
        <taxon>Hyphomicrobiales</taxon>
        <taxon>Nitrobacteraceae</taxon>
        <taxon>Rhodopseudomonas</taxon>
    </lineage>
</organism>
<comment type="function">
    <text>Antenna complexes are light-harvesting systems, which transfer the excitation energy to the reaction centers.</text>
</comment>
<comment type="subunit">
    <text>The core complex is formed by different alpha and beta chains, binding bacteriochlorophyll molecules, and arranged most probably in tetrameric structures disposed around the reaction center. The non-pigmented gamma chains may constitute additional components.</text>
</comment>
<comment type="subcellular location">
    <subcellularLocation>
        <location>Cell inner membrane</location>
        <topology>Single-pass type II membrane protein</topology>
    </subcellularLocation>
</comment>
<comment type="similarity">
    <text evidence="2">Belongs to the antenna complex alpha subunit family.</text>
</comment>
<evidence type="ECO:0000255" key="1"/>
<evidence type="ECO:0000305" key="2"/>
<evidence type="ECO:0007829" key="3">
    <source>
        <dbReference type="PDB" id="7ZDI"/>
    </source>
</evidence>
<protein>
    <recommendedName>
        <fullName>Light-harvesting protein B-800-850 alpha chain B</fullName>
        <shortName>LH II-B alpha</shortName>
    </recommendedName>
    <alternativeName>
        <fullName>Antenna pigment protein alpha chain B</fullName>
    </alternativeName>
</protein>
<name>LHA2_RHOPA</name>
<proteinExistence type="evidence at protein level"/>